<accession>Q08DM1</accession>
<dbReference type="EMBL" id="BC123672">
    <property type="protein sequence ID" value="AAI23673.1"/>
    <property type="molecule type" value="mRNA"/>
</dbReference>
<dbReference type="SMR" id="Q08DM1"/>
<dbReference type="FunCoup" id="Q08DM1">
    <property type="interactions" value="317"/>
</dbReference>
<dbReference type="STRING" id="9913.ENSBTAP00000054225"/>
<dbReference type="PaxDb" id="9913-ENSBTAP00000054225"/>
<dbReference type="Ensembl" id="ENSBTAT00000067620.2">
    <property type="protein sequence ID" value="ENSBTAP00000061425.1"/>
    <property type="gene ID" value="ENSBTAG00000045887.3"/>
</dbReference>
<dbReference type="VEuPathDB" id="HostDB:ENSBTAG00000045887"/>
<dbReference type="VGNC" id="VGNC:56943">
    <property type="gene designation" value="DMTN"/>
</dbReference>
<dbReference type="eggNOG" id="KOG1044">
    <property type="taxonomic scope" value="Eukaryota"/>
</dbReference>
<dbReference type="GeneTree" id="ENSGT00950000182850"/>
<dbReference type="InParanoid" id="Q08DM1"/>
<dbReference type="OrthoDB" id="1746725at2759"/>
<dbReference type="TreeFam" id="TF318042"/>
<dbReference type="Reactome" id="R-BTA-5223345">
    <property type="pathway name" value="Miscellaneous transport and binding events"/>
</dbReference>
<dbReference type="Proteomes" id="UP000009136">
    <property type="component" value="Chromosome 8"/>
</dbReference>
<dbReference type="Bgee" id="ENSBTAG00000045887">
    <property type="expression patterns" value="Expressed in temporal cortex and 99 other cell types or tissues"/>
</dbReference>
<dbReference type="GO" id="GO:0015629">
    <property type="term" value="C:actin cytoskeleton"/>
    <property type="evidence" value="ECO:0000318"/>
    <property type="project" value="GO_Central"/>
</dbReference>
<dbReference type="GO" id="GO:0005884">
    <property type="term" value="C:actin filament"/>
    <property type="evidence" value="ECO:0000250"/>
    <property type="project" value="UniProtKB"/>
</dbReference>
<dbReference type="GO" id="GO:0031253">
    <property type="term" value="C:cell projection membrane"/>
    <property type="evidence" value="ECO:0000250"/>
    <property type="project" value="UniProtKB"/>
</dbReference>
<dbReference type="GO" id="GO:0030863">
    <property type="term" value="C:cortical cytoskeleton"/>
    <property type="evidence" value="ECO:0007669"/>
    <property type="project" value="Ensembl"/>
</dbReference>
<dbReference type="GO" id="GO:0031410">
    <property type="term" value="C:cytoplasmic vesicle"/>
    <property type="evidence" value="ECO:0000250"/>
    <property type="project" value="UniProtKB"/>
</dbReference>
<dbReference type="GO" id="GO:0005829">
    <property type="term" value="C:cytosol"/>
    <property type="evidence" value="ECO:0000250"/>
    <property type="project" value="UniProtKB"/>
</dbReference>
<dbReference type="GO" id="GO:0048471">
    <property type="term" value="C:perinuclear region of cytoplasm"/>
    <property type="evidence" value="ECO:0000250"/>
    <property type="project" value="UniProtKB"/>
</dbReference>
<dbReference type="GO" id="GO:0005886">
    <property type="term" value="C:plasma membrane"/>
    <property type="evidence" value="ECO:0000250"/>
    <property type="project" value="UniProtKB"/>
</dbReference>
<dbReference type="GO" id="GO:0031095">
    <property type="term" value="C:platelet dense tubular network membrane"/>
    <property type="evidence" value="ECO:0000250"/>
    <property type="project" value="UniProtKB"/>
</dbReference>
<dbReference type="GO" id="GO:0014069">
    <property type="term" value="C:postsynaptic density"/>
    <property type="evidence" value="ECO:0007669"/>
    <property type="project" value="Ensembl"/>
</dbReference>
<dbReference type="GO" id="GO:0005790">
    <property type="term" value="C:smooth endoplasmic reticulum"/>
    <property type="evidence" value="ECO:0007669"/>
    <property type="project" value="GOC"/>
</dbReference>
<dbReference type="GO" id="GO:0014731">
    <property type="term" value="C:spectrin-associated cytoskeleton"/>
    <property type="evidence" value="ECO:0000250"/>
    <property type="project" value="UniProtKB"/>
</dbReference>
<dbReference type="GO" id="GO:0003779">
    <property type="term" value="F:actin binding"/>
    <property type="evidence" value="ECO:0000250"/>
    <property type="project" value="UniProtKB"/>
</dbReference>
<dbReference type="GO" id="GO:0051015">
    <property type="term" value="F:actin filament binding"/>
    <property type="evidence" value="ECO:0000318"/>
    <property type="project" value="GO_Central"/>
</dbReference>
<dbReference type="GO" id="GO:0005102">
    <property type="term" value="F:signaling receptor binding"/>
    <property type="evidence" value="ECO:0000250"/>
    <property type="project" value="UniProtKB"/>
</dbReference>
<dbReference type="GO" id="GO:0030507">
    <property type="term" value="F:spectrin binding"/>
    <property type="evidence" value="ECO:0000250"/>
    <property type="project" value="UniProtKB"/>
</dbReference>
<dbReference type="GO" id="GO:0030036">
    <property type="term" value="P:actin cytoskeleton organization"/>
    <property type="evidence" value="ECO:0000250"/>
    <property type="project" value="UniProtKB"/>
</dbReference>
<dbReference type="GO" id="GO:0051017">
    <property type="term" value="P:actin filament bundle assembly"/>
    <property type="evidence" value="ECO:0000250"/>
    <property type="project" value="UniProtKB"/>
</dbReference>
<dbReference type="GO" id="GO:0051693">
    <property type="term" value="P:actin filament capping"/>
    <property type="evidence" value="ECO:0007669"/>
    <property type="project" value="UniProtKB-KW"/>
</dbReference>
<dbReference type="GO" id="GO:0071320">
    <property type="term" value="P:cellular response to cAMP"/>
    <property type="evidence" value="ECO:0000250"/>
    <property type="project" value="UniProtKB"/>
</dbReference>
<dbReference type="GO" id="GO:0071786">
    <property type="term" value="P:endoplasmic reticulum tubular network organization"/>
    <property type="evidence" value="ECO:0000250"/>
    <property type="project" value="UniProtKB"/>
</dbReference>
<dbReference type="GO" id="GO:0048821">
    <property type="term" value="P:erythrocyte development"/>
    <property type="evidence" value="ECO:0000250"/>
    <property type="project" value="UniProtKB"/>
</dbReference>
<dbReference type="GO" id="GO:0030032">
    <property type="term" value="P:lamellipodium assembly"/>
    <property type="evidence" value="ECO:0000318"/>
    <property type="project" value="GO_Central"/>
</dbReference>
<dbReference type="GO" id="GO:0010812">
    <property type="term" value="P:negative regulation of cell-substrate adhesion"/>
    <property type="evidence" value="ECO:0000250"/>
    <property type="project" value="UniProtKB"/>
</dbReference>
<dbReference type="GO" id="GO:0051895">
    <property type="term" value="P:negative regulation of focal adhesion assembly"/>
    <property type="evidence" value="ECO:0000250"/>
    <property type="project" value="UniProtKB"/>
</dbReference>
<dbReference type="GO" id="GO:0033137">
    <property type="term" value="P:negative regulation of peptidyl-serine phosphorylation"/>
    <property type="evidence" value="ECO:0000250"/>
    <property type="project" value="UniProtKB"/>
</dbReference>
<dbReference type="GO" id="GO:0010801">
    <property type="term" value="P:negative regulation of peptidyl-threonine phosphorylation"/>
    <property type="evidence" value="ECO:0000250"/>
    <property type="project" value="UniProtKB"/>
</dbReference>
<dbReference type="GO" id="GO:0050732">
    <property type="term" value="P:negative regulation of peptidyl-tyrosine phosphorylation"/>
    <property type="evidence" value="ECO:0000250"/>
    <property type="project" value="UniProtKB"/>
</dbReference>
<dbReference type="GO" id="GO:0090315">
    <property type="term" value="P:negative regulation of protein targeting to membrane"/>
    <property type="evidence" value="ECO:0000250"/>
    <property type="project" value="UniProtKB"/>
</dbReference>
<dbReference type="GO" id="GO:1900025">
    <property type="term" value="P:negative regulation of substrate adhesion-dependent cell spreading"/>
    <property type="evidence" value="ECO:0000250"/>
    <property type="project" value="UniProtKB"/>
</dbReference>
<dbReference type="GO" id="GO:0010763">
    <property type="term" value="P:positive regulation of fibroblast migration"/>
    <property type="evidence" value="ECO:0000250"/>
    <property type="project" value="UniProtKB"/>
</dbReference>
<dbReference type="GO" id="GO:0090303">
    <property type="term" value="P:positive regulation of wound healing"/>
    <property type="evidence" value="ECO:0000250"/>
    <property type="project" value="UniProtKB"/>
</dbReference>
<dbReference type="GO" id="GO:0065003">
    <property type="term" value="P:protein-containing complex assembly"/>
    <property type="evidence" value="ECO:0000250"/>
    <property type="project" value="UniProtKB"/>
</dbReference>
<dbReference type="GO" id="GO:0032956">
    <property type="term" value="P:regulation of actin cytoskeleton organization"/>
    <property type="evidence" value="ECO:0000250"/>
    <property type="project" value="UniProtKB"/>
</dbReference>
<dbReference type="GO" id="GO:0008360">
    <property type="term" value="P:regulation of cell shape"/>
    <property type="evidence" value="ECO:0000250"/>
    <property type="project" value="UniProtKB"/>
</dbReference>
<dbReference type="GO" id="GO:0051489">
    <property type="term" value="P:regulation of filopodium assembly"/>
    <property type="evidence" value="ECO:0000250"/>
    <property type="project" value="UniProtKB"/>
</dbReference>
<dbReference type="GO" id="GO:0010591">
    <property type="term" value="P:regulation of lamellipodium assembly"/>
    <property type="evidence" value="ECO:0000250"/>
    <property type="project" value="UniProtKB"/>
</dbReference>
<dbReference type="GO" id="GO:0051563">
    <property type="term" value="P:smooth endoplasmic reticulum calcium ion homeostasis"/>
    <property type="evidence" value="ECO:0000250"/>
    <property type="project" value="UniProtKB"/>
</dbReference>
<dbReference type="FunFam" id="1.10.950.10:FF:000002">
    <property type="entry name" value="Dematin isoform X2"/>
    <property type="match status" value="1"/>
</dbReference>
<dbReference type="Gene3D" id="1.10.950.10">
    <property type="entry name" value="Villin headpiece domain"/>
    <property type="match status" value="1"/>
</dbReference>
<dbReference type="InterPro" id="IPR032402">
    <property type="entry name" value="AbLIM_anchor"/>
</dbReference>
<dbReference type="InterPro" id="IPR051618">
    <property type="entry name" value="Actin-binding_LIM"/>
</dbReference>
<dbReference type="InterPro" id="IPR003128">
    <property type="entry name" value="Villin_headpiece"/>
</dbReference>
<dbReference type="InterPro" id="IPR036886">
    <property type="entry name" value="Villin_headpiece_dom_sf"/>
</dbReference>
<dbReference type="PANTHER" id="PTHR24213">
    <property type="entry name" value="ACTIN-BINDING LIM PROTEIN"/>
    <property type="match status" value="1"/>
</dbReference>
<dbReference type="PANTHER" id="PTHR24213:SF17">
    <property type="entry name" value="DEMATIN"/>
    <property type="match status" value="1"/>
</dbReference>
<dbReference type="Pfam" id="PF16182">
    <property type="entry name" value="AbLIM_anchor"/>
    <property type="match status" value="2"/>
</dbReference>
<dbReference type="Pfam" id="PF02209">
    <property type="entry name" value="VHP"/>
    <property type="match status" value="1"/>
</dbReference>
<dbReference type="SMART" id="SM00153">
    <property type="entry name" value="VHP"/>
    <property type="match status" value="1"/>
</dbReference>
<dbReference type="SUPFAM" id="SSF47050">
    <property type="entry name" value="VHP, Villin headpiece domain"/>
    <property type="match status" value="1"/>
</dbReference>
<dbReference type="PROSITE" id="PS51089">
    <property type="entry name" value="HP"/>
    <property type="match status" value="1"/>
</dbReference>
<feature type="chain" id="PRO_0000284659" description="Dematin">
    <location>
        <begin position="1"/>
        <end position="406"/>
    </location>
</feature>
<feature type="domain" description="HP" evidence="4">
    <location>
        <begin position="338"/>
        <end position="406"/>
    </location>
</feature>
<feature type="region of interest" description="Disordered" evidence="5">
    <location>
        <begin position="1"/>
        <end position="30"/>
    </location>
</feature>
<feature type="region of interest" description="Disordered" evidence="5">
    <location>
        <begin position="78"/>
        <end position="333"/>
    </location>
</feature>
<feature type="region of interest" description="Interaction with RASGRF2" evidence="1">
    <location>
        <begin position="225"/>
        <end position="309"/>
    </location>
</feature>
<feature type="compositionally biased region" description="Low complexity" evidence="5">
    <location>
        <begin position="11"/>
        <end position="29"/>
    </location>
</feature>
<feature type="compositionally biased region" description="Polar residues" evidence="5">
    <location>
        <begin position="105"/>
        <end position="114"/>
    </location>
</feature>
<feature type="compositionally biased region" description="Acidic residues" evidence="5">
    <location>
        <begin position="217"/>
        <end position="228"/>
    </location>
</feature>
<feature type="compositionally biased region" description="Basic and acidic residues" evidence="5">
    <location>
        <begin position="229"/>
        <end position="243"/>
    </location>
</feature>
<feature type="compositionally biased region" description="Basic and acidic residues" evidence="5">
    <location>
        <begin position="253"/>
        <end position="262"/>
    </location>
</feature>
<feature type="compositionally biased region" description="Polar residues" evidence="5">
    <location>
        <begin position="282"/>
        <end position="323"/>
    </location>
</feature>
<feature type="modified residue" description="Phosphoserine" evidence="2">
    <location>
        <position position="16"/>
    </location>
</feature>
<feature type="modified residue" description="Phosphoserine" evidence="2">
    <location>
        <position position="18"/>
    </location>
</feature>
<feature type="modified residue" description="Phosphoserine" evidence="2">
    <location>
        <position position="26"/>
    </location>
</feature>
<feature type="modified residue" description="Phosphoserine" evidence="2">
    <location>
        <position position="92"/>
    </location>
</feature>
<feature type="modified residue" description="Phosphoserine" evidence="2">
    <location>
        <position position="96"/>
    </location>
</feature>
<feature type="modified residue" description="Phosphoserine" evidence="2">
    <location>
        <position position="105"/>
    </location>
</feature>
<feature type="modified residue" description="Phosphoserine" evidence="3">
    <location>
        <position position="110"/>
    </location>
</feature>
<feature type="modified residue" description="Phosphoserine" evidence="3">
    <location>
        <position position="113"/>
    </location>
</feature>
<feature type="modified residue" description="Phosphoserine" evidence="2">
    <location>
        <position position="157"/>
    </location>
</feature>
<feature type="modified residue" description="Phosphoserine" evidence="2">
    <location>
        <position position="227"/>
    </location>
</feature>
<feature type="modified residue" description="Phosphoserine" evidence="2">
    <location>
        <position position="270"/>
    </location>
</feature>
<feature type="modified residue" description="Phosphoserine" evidence="2">
    <location>
        <position position="280"/>
    </location>
</feature>
<feature type="modified residue" description="Phosphoserine" evidence="2">
    <location>
        <position position="290"/>
    </location>
</feature>
<feature type="modified residue" description="Phosphoserine" evidence="2">
    <location>
        <position position="304"/>
    </location>
</feature>
<feature type="modified residue" description="Phosphoserine" evidence="3">
    <location>
        <position position="316"/>
    </location>
</feature>
<feature type="modified residue" description="Phosphoserine" evidence="2">
    <location>
        <position position="334"/>
    </location>
</feature>
<feature type="modified residue" description="Phosphoserine" evidence="2">
    <location>
        <position position="373"/>
    </location>
</feature>
<feature type="modified residue" description="Phosphoserine" evidence="2">
    <location>
        <position position="384"/>
    </location>
</feature>
<feature type="modified residue" description="Phosphoserine; by PKA" evidence="2">
    <location>
        <position position="404"/>
    </location>
</feature>
<organism>
    <name type="scientific">Bos taurus</name>
    <name type="common">Bovine</name>
    <dbReference type="NCBI Taxonomy" id="9913"/>
    <lineage>
        <taxon>Eukaryota</taxon>
        <taxon>Metazoa</taxon>
        <taxon>Chordata</taxon>
        <taxon>Craniata</taxon>
        <taxon>Vertebrata</taxon>
        <taxon>Euteleostomi</taxon>
        <taxon>Mammalia</taxon>
        <taxon>Eutheria</taxon>
        <taxon>Laurasiatheria</taxon>
        <taxon>Artiodactyla</taxon>
        <taxon>Ruminantia</taxon>
        <taxon>Pecora</taxon>
        <taxon>Bovidae</taxon>
        <taxon>Bovinae</taxon>
        <taxon>Bos</taxon>
    </lineage>
</organism>
<evidence type="ECO:0000250" key="1"/>
<evidence type="ECO:0000250" key="2">
    <source>
        <dbReference type="UniProtKB" id="Q08495"/>
    </source>
</evidence>
<evidence type="ECO:0000250" key="3">
    <source>
        <dbReference type="UniProtKB" id="Q9WV69"/>
    </source>
</evidence>
<evidence type="ECO:0000255" key="4">
    <source>
        <dbReference type="PROSITE-ProRule" id="PRU00595"/>
    </source>
</evidence>
<evidence type="ECO:0000256" key="5">
    <source>
        <dbReference type="SAM" id="MobiDB-lite"/>
    </source>
</evidence>
<evidence type="ECO:0000305" key="6"/>
<proteinExistence type="evidence at transcript level"/>
<gene>
    <name type="primary">DMTN</name>
    <name type="synonym">DMT</name>
    <name type="synonym">EPB49</name>
</gene>
<sequence length="406" mass="45548">MERLQKQPLTSPGSVSSSRDSSVPGSPSSIVAKMDNQVLGYKDLAAIPKDKAILDIERPDLMIYEPHFTYSLLEHVELPRSRERSLSPKSTSPPPSPEVWAESRSPGTISQASAPRTAGTPRTSLPHFHHPETTRPDSNIYKKPPIYKQRAESTGGSPQSKHPIEDLIIESSKFPAAQPPDPNQPAKIETDYWPCPPSLAVVETEWRKRKASRRGAEEEEEEEDDDSGEEMKALRERQREELSKVTSNLGKMILKEEMEKSLPIRRKTRSLPDRTPFHTSLHAGTSKSSSLPAYGRTTLSRLQSTDFSPSGSEAESPGLQNGEGQRGRMDRGNSLPCVLEQKIYPYEMLVVTNRGRTKLPPGVDRMRLERHLSAEDFSRVFSMSPEEFGKLALWKRNELKKKASLF</sequence>
<comment type="function">
    <text evidence="1">Membrane-cytoskeleton-associated protein with F-actin-binding activity that induces F-actin bundles formation and stabilization. Its F-actin-bundling activity is reversibly regulated upon its phosphorylation by the cAMP-dependent protein kinase A (PKA). Binds to the erythrocyte membrane glucose transporter-1 SLC2A1/GLUT1, and hence stabilizes and attaches the spectrin-actin network to the erythrocytic plasma membrane. Plays a role in maintaining the functional integrity of PKA-activated erythrocyte shape and the membrane mechanical properties. Also plays a role as a modulator of actin dynamics in fibroblasts; acts as a negative regulator of the RhoA activation pathway. In platelets, functions as a regulator of internal calcium mobilization across the dense tubular system that affects platelet granule secretion pathways and aggregation. Also required for the formation of a diverse set of cell protrusions, such as filopodia and lamellipodia, necessary for platelet cell spreading, motility and migration. Acts as a tumor suppressor and inhibits malignant cell transformation (By similarity).</text>
</comment>
<comment type="subunit">
    <text evidence="1">Monomeric; under reducing conditions. Self-associates. Exists under oxidizing condition as a trimer linked by disulfide bonds. Found in a complex with DMTN, F-actin and spectrin. Found in a complex with ADD2, DMTN and SLC2A1. Interacts with F-actin, ITPKB and spectrin. Interacts with SLC2A1 (via C-terminus cytoplasmic region). Interacts with RASGRF2 (By similarity).</text>
</comment>
<comment type="subcellular location">
    <subcellularLocation>
        <location evidence="1">Cytoplasm</location>
    </subcellularLocation>
    <subcellularLocation>
        <location evidence="1">Cytoplasm</location>
        <location evidence="1">Cytosol</location>
    </subcellularLocation>
    <subcellularLocation>
        <location evidence="1">Cytoplasm</location>
        <location evidence="1">Perinuclear region</location>
    </subcellularLocation>
    <subcellularLocation>
        <location evidence="1">Cytoplasm</location>
        <location evidence="1">Cytoskeleton</location>
    </subcellularLocation>
    <subcellularLocation>
        <location evidence="1">Cell membrane</location>
    </subcellularLocation>
    <subcellularLocation>
        <location evidence="1">Membrane</location>
    </subcellularLocation>
    <subcellularLocation>
        <location evidence="1">Endomembrane system</location>
    </subcellularLocation>
    <subcellularLocation>
        <location evidence="1">Cell projection</location>
    </subcellularLocation>
    <text evidence="1">Localized at the spectrin-actin junction of erythrocyte plasma membrane. Localized to intracellular membranes and the cytoskeletal network. Localized at intracellular membrane-bounded organelle compartment in platelets that likely represent the dense tubular network membrane (By similarity).</text>
</comment>
<comment type="domain">
    <text evidence="1">Both the N-terminal core domain and the C-terminal headpiece domain are sufficient for binding to F-actin and necessary for actin bundling activity.</text>
</comment>
<comment type="PTM">
    <text evidence="1">Phosphorylated. Phosphorylation at Ser-404 by PKA causes the C-terminal headpiece domain to associate with the N-terminal core domain, and leads to the inhibition of its actin bundling activity (By similarity).</text>
</comment>
<comment type="similarity">
    <text evidence="6">Belongs to the villin/gelsolin family.</text>
</comment>
<protein>
    <recommendedName>
        <fullName>Dematin</fullName>
    </recommendedName>
    <alternativeName>
        <fullName>Dematin actin-binding protein</fullName>
    </alternativeName>
    <alternativeName>
        <fullName>Erythrocyte membrane protein band 4.9</fullName>
    </alternativeName>
</protein>
<keyword id="KW-0117">Actin capping</keyword>
<keyword id="KW-0009">Actin-binding</keyword>
<keyword id="KW-1003">Cell membrane</keyword>
<keyword id="KW-0966">Cell projection</keyword>
<keyword id="KW-0963">Cytoplasm</keyword>
<keyword id="KW-0206">Cytoskeleton</keyword>
<keyword id="KW-1015">Disulfide bond</keyword>
<keyword id="KW-0472">Membrane</keyword>
<keyword id="KW-0597">Phosphoprotein</keyword>
<keyword id="KW-1185">Reference proteome</keyword>
<keyword id="KW-0677">Repeat</keyword>
<keyword id="KW-0043">Tumor suppressor</keyword>
<reference key="1">
    <citation type="submission" date="2006-09" db="EMBL/GenBank/DDBJ databases">
        <authorList>
            <consortium name="NIH - Mammalian Gene Collection (MGC) project"/>
        </authorList>
    </citation>
    <scope>NUCLEOTIDE SEQUENCE [LARGE SCALE MRNA]</scope>
    <source>
        <strain>Hereford</strain>
        <tissue>Brain cortex</tissue>
    </source>
</reference>
<name>DEMA_BOVIN</name>